<comment type="function">
    <text evidence="1">Catalyzes the attachment of proline to tRNA(Pro) in a two-step reaction: proline is first activated by ATP to form Pro-AMP and then transferred to the acceptor end of tRNA(Pro). As ProRS can inadvertently accommodate and process non-cognate amino acids such as alanine and cysteine, to avoid such errors it has two additional distinct editing activities against alanine. One activity is designated as 'pretransfer' editing and involves the tRNA(Pro)-independent hydrolysis of activated Ala-AMP. The other activity is designated 'posttransfer' editing and involves deacylation of mischarged Ala-tRNA(Pro). The misacylated Cys-tRNA(Pro) is not edited by ProRS.</text>
</comment>
<comment type="catalytic activity">
    <reaction evidence="1">
        <text>tRNA(Pro) + L-proline + ATP = L-prolyl-tRNA(Pro) + AMP + diphosphate</text>
        <dbReference type="Rhea" id="RHEA:14305"/>
        <dbReference type="Rhea" id="RHEA-COMP:9700"/>
        <dbReference type="Rhea" id="RHEA-COMP:9702"/>
        <dbReference type="ChEBI" id="CHEBI:30616"/>
        <dbReference type="ChEBI" id="CHEBI:33019"/>
        <dbReference type="ChEBI" id="CHEBI:60039"/>
        <dbReference type="ChEBI" id="CHEBI:78442"/>
        <dbReference type="ChEBI" id="CHEBI:78532"/>
        <dbReference type="ChEBI" id="CHEBI:456215"/>
        <dbReference type="EC" id="6.1.1.15"/>
    </reaction>
</comment>
<comment type="subunit">
    <text evidence="1">Homodimer.</text>
</comment>
<comment type="subcellular location">
    <subcellularLocation>
        <location evidence="1">Cytoplasm</location>
    </subcellularLocation>
</comment>
<comment type="domain">
    <text evidence="1">Consists of three domains: the N-terminal catalytic domain, the editing domain and the C-terminal anticodon-binding domain.</text>
</comment>
<comment type="similarity">
    <text evidence="1">Belongs to the class-II aminoacyl-tRNA synthetase family. ProS type 1 subfamily.</text>
</comment>
<gene>
    <name evidence="1" type="primary">proS</name>
    <name type="ordered locus">BUAPTUC7_237</name>
</gene>
<feature type="chain" id="PRO_1000185492" description="Proline--tRNA ligase">
    <location>
        <begin position="1"/>
        <end position="572"/>
    </location>
</feature>
<protein>
    <recommendedName>
        <fullName evidence="1">Proline--tRNA ligase</fullName>
        <ecNumber evidence="1">6.1.1.15</ecNumber>
    </recommendedName>
    <alternativeName>
        <fullName evidence="1">Prolyl-tRNA synthetase</fullName>
        <shortName evidence="1">ProRS</shortName>
    </alternativeName>
</protein>
<sequence length="572" mass="66226">MLTSQYLLSTSKDIPYDAKIISHQLMIRSGMIRKTSSGLYVWLPTGMRVLKKIKNIITTEMEKINALEILMPIIQPEYLWKESGRLNLYGEELLRFLDRRKNQFILGPTNEEVVTNFIGSEIHSYKQLPLTVYQIQTKFRDEIRPRFGIIRTREFTMKDAYSFHINQSCLENTYNKFYDSYINIFKKMNLNFCAVKADSGSMGGNISHEFQAFSQNGEDEIVFSNDKLYSSNMNMAESIETIDFFKKKYSSCLIKNKTNTKKSIIMSEKLNTPLINQIQTFLIQTKINDITSIAALLIRGDHELNFFKVEKIDIINKPLVFLNEKEVISLIGVKKEFLGPLGLKVPIIADISTFNMKNFTIGSNINKHFFINVNWNIDLPMPIFKDIRKVTKNDLSPNGSGYLNIKQSIEIGHIFQLGQKYSRKIQQSVKIKNGNLKNLYMGCYGIGITRIAAAVIEQHHDKNGIIWPDSIAPFEVVILPINMKKDNKIKIIAHFLYKKFKKTGIDVILDDRDERPGVMFNEVDLIGIPHQIIISKRSINYDNVEYRERKNKENILINIKDIKNFIIQKLKK</sequence>
<proteinExistence type="inferred from homology"/>
<reference key="1">
    <citation type="journal article" date="2009" name="Science">
        <title>The dynamics and time scale of ongoing genomic erosion in symbiotic bacteria.</title>
        <authorList>
            <person name="Moran N.A."/>
            <person name="McLaughlin H.J."/>
            <person name="Sorek R."/>
        </authorList>
    </citation>
    <scope>NUCLEOTIDE SEQUENCE [LARGE SCALE GENOMIC DNA]</scope>
    <source>
        <strain>Tuc7</strain>
    </source>
</reference>
<name>SYP_BUCAT</name>
<dbReference type="EC" id="6.1.1.15" evidence="1"/>
<dbReference type="EMBL" id="CP001158">
    <property type="protein sequence ID" value="ACL30056.1"/>
    <property type="molecule type" value="Genomic_DNA"/>
</dbReference>
<dbReference type="RefSeq" id="WP_009874196.1">
    <property type="nucleotide sequence ID" value="NC_011834.1"/>
</dbReference>
<dbReference type="SMR" id="B8D7E1"/>
<dbReference type="KEGG" id="bau:BUAPTUC7_237"/>
<dbReference type="HOGENOM" id="CLU_016739_0_0_6"/>
<dbReference type="GO" id="GO:0005829">
    <property type="term" value="C:cytosol"/>
    <property type="evidence" value="ECO:0007669"/>
    <property type="project" value="TreeGrafter"/>
</dbReference>
<dbReference type="GO" id="GO:0002161">
    <property type="term" value="F:aminoacyl-tRNA deacylase activity"/>
    <property type="evidence" value="ECO:0007669"/>
    <property type="project" value="InterPro"/>
</dbReference>
<dbReference type="GO" id="GO:0005524">
    <property type="term" value="F:ATP binding"/>
    <property type="evidence" value="ECO:0007669"/>
    <property type="project" value="UniProtKB-UniRule"/>
</dbReference>
<dbReference type="GO" id="GO:0004827">
    <property type="term" value="F:proline-tRNA ligase activity"/>
    <property type="evidence" value="ECO:0007669"/>
    <property type="project" value="UniProtKB-UniRule"/>
</dbReference>
<dbReference type="GO" id="GO:0006433">
    <property type="term" value="P:prolyl-tRNA aminoacylation"/>
    <property type="evidence" value="ECO:0007669"/>
    <property type="project" value="UniProtKB-UniRule"/>
</dbReference>
<dbReference type="CDD" id="cd04334">
    <property type="entry name" value="ProRS-INS"/>
    <property type="match status" value="1"/>
</dbReference>
<dbReference type="CDD" id="cd00861">
    <property type="entry name" value="ProRS_anticodon_short"/>
    <property type="match status" value="1"/>
</dbReference>
<dbReference type="CDD" id="cd00779">
    <property type="entry name" value="ProRS_core_prok"/>
    <property type="match status" value="1"/>
</dbReference>
<dbReference type="Gene3D" id="3.40.50.800">
    <property type="entry name" value="Anticodon-binding domain"/>
    <property type="match status" value="1"/>
</dbReference>
<dbReference type="Gene3D" id="3.30.930.10">
    <property type="entry name" value="Bira Bifunctional Protein, Domain 2"/>
    <property type="match status" value="2"/>
</dbReference>
<dbReference type="HAMAP" id="MF_01569">
    <property type="entry name" value="Pro_tRNA_synth_type1"/>
    <property type="match status" value="1"/>
</dbReference>
<dbReference type="InterPro" id="IPR002314">
    <property type="entry name" value="aa-tRNA-synt_IIb"/>
</dbReference>
<dbReference type="InterPro" id="IPR006195">
    <property type="entry name" value="aa-tRNA-synth_II"/>
</dbReference>
<dbReference type="InterPro" id="IPR045864">
    <property type="entry name" value="aa-tRNA-synth_II/BPL/LPL"/>
</dbReference>
<dbReference type="InterPro" id="IPR004154">
    <property type="entry name" value="Anticodon-bd"/>
</dbReference>
<dbReference type="InterPro" id="IPR036621">
    <property type="entry name" value="Anticodon-bd_dom_sf"/>
</dbReference>
<dbReference type="InterPro" id="IPR002316">
    <property type="entry name" value="Pro-tRNA-ligase_IIa"/>
</dbReference>
<dbReference type="InterPro" id="IPR004500">
    <property type="entry name" value="Pro-tRNA-synth_IIa_bac-type"/>
</dbReference>
<dbReference type="InterPro" id="IPR023717">
    <property type="entry name" value="Pro-tRNA-Synthase_IIa_type1"/>
</dbReference>
<dbReference type="InterPro" id="IPR050062">
    <property type="entry name" value="Pro-tRNA_synthetase"/>
</dbReference>
<dbReference type="InterPro" id="IPR044140">
    <property type="entry name" value="ProRS_anticodon_short"/>
</dbReference>
<dbReference type="InterPro" id="IPR033730">
    <property type="entry name" value="ProRS_core_prok"/>
</dbReference>
<dbReference type="InterPro" id="IPR036754">
    <property type="entry name" value="YbaK/aa-tRNA-synt-asso_dom_sf"/>
</dbReference>
<dbReference type="InterPro" id="IPR007214">
    <property type="entry name" value="YbaK/aa-tRNA-synth-assoc-dom"/>
</dbReference>
<dbReference type="NCBIfam" id="NF006625">
    <property type="entry name" value="PRK09194.1"/>
    <property type="match status" value="1"/>
</dbReference>
<dbReference type="NCBIfam" id="TIGR00409">
    <property type="entry name" value="proS_fam_II"/>
    <property type="match status" value="1"/>
</dbReference>
<dbReference type="PANTHER" id="PTHR42753">
    <property type="entry name" value="MITOCHONDRIAL RIBOSOME PROTEIN L39/PROLYL-TRNA LIGASE FAMILY MEMBER"/>
    <property type="match status" value="1"/>
</dbReference>
<dbReference type="PANTHER" id="PTHR42753:SF2">
    <property type="entry name" value="PROLINE--TRNA LIGASE"/>
    <property type="match status" value="1"/>
</dbReference>
<dbReference type="Pfam" id="PF03129">
    <property type="entry name" value="HGTP_anticodon"/>
    <property type="match status" value="1"/>
</dbReference>
<dbReference type="Pfam" id="PF00587">
    <property type="entry name" value="tRNA-synt_2b"/>
    <property type="match status" value="1"/>
</dbReference>
<dbReference type="Pfam" id="PF04073">
    <property type="entry name" value="tRNA_edit"/>
    <property type="match status" value="1"/>
</dbReference>
<dbReference type="PRINTS" id="PR01046">
    <property type="entry name" value="TRNASYNTHPRO"/>
</dbReference>
<dbReference type="SUPFAM" id="SSF52954">
    <property type="entry name" value="Class II aaRS ABD-related"/>
    <property type="match status" value="1"/>
</dbReference>
<dbReference type="SUPFAM" id="SSF55681">
    <property type="entry name" value="Class II aaRS and biotin synthetases"/>
    <property type="match status" value="1"/>
</dbReference>
<dbReference type="SUPFAM" id="SSF55826">
    <property type="entry name" value="YbaK/ProRS associated domain"/>
    <property type="match status" value="1"/>
</dbReference>
<dbReference type="PROSITE" id="PS50862">
    <property type="entry name" value="AA_TRNA_LIGASE_II"/>
    <property type="match status" value="1"/>
</dbReference>
<evidence type="ECO:0000255" key="1">
    <source>
        <dbReference type="HAMAP-Rule" id="MF_01569"/>
    </source>
</evidence>
<organism>
    <name type="scientific">Buchnera aphidicola subsp. Acyrthosiphon pisum (strain Tuc7)</name>
    <dbReference type="NCBI Taxonomy" id="561501"/>
    <lineage>
        <taxon>Bacteria</taxon>
        <taxon>Pseudomonadati</taxon>
        <taxon>Pseudomonadota</taxon>
        <taxon>Gammaproteobacteria</taxon>
        <taxon>Enterobacterales</taxon>
        <taxon>Erwiniaceae</taxon>
        <taxon>Buchnera</taxon>
    </lineage>
</organism>
<accession>B8D7E1</accession>
<keyword id="KW-0030">Aminoacyl-tRNA synthetase</keyword>
<keyword id="KW-0067">ATP-binding</keyword>
<keyword id="KW-0963">Cytoplasm</keyword>
<keyword id="KW-0436">Ligase</keyword>
<keyword id="KW-0547">Nucleotide-binding</keyword>
<keyword id="KW-0648">Protein biosynthesis</keyword>